<comment type="function">
    <text evidence="1">Acts as a chaperone.</text>
</comment>
<comment type="similarity">
    <text evidence="3">Belongs to the heat shock protein 70 family.</text>
</comment>
<reference key="1">
    <citation type="journal article" date="2002" name="J. Bacteriol.">
        <title>Whole-genome comparison of Mycobacterium tuberculosis clinical and laboratory strains.</title>
        <authorList>
            <person name="Fleischmann R.D."/>
            <person name="Alland D."/>
            <person name="Eisen J.A."/>
            <person name="Carpenter L."/>
            <person name="White O."/>
            <person name="Peterson J.D."/>
            <person name="DeBoy R.T."/>
            <person name="Dodson R.J."/>
            <person name="Gwinn M.L."/>
            <person name="Haft D.H."/>
            <person name="Hickey E.K."/>
            <person name="Kolonay J.F."/>
            <person name="Nelson W.C."/>
            <person name="Umayam L.A."/>
            <person name="Ermolaeva M.D."/>
            <person name="Salzberg S.L."/>
            <person name="Delcher A."/>
            <person name="Utterback T.R."/>
            <person name="Weidman J.F."/>
            <person name="Khouri H.M."/>
            <person name="Gill J."/>
            <person name="Mikula A."/>
            <person name="Bishai W."/>
            <person name="Jacobs W.R. Jr."/>
            <person name="Venter J.C."/>
            <person name="Fraser C.M."/>
        </authorList>
    </citation>
    <scope>NUCLEOTIDE SEQUENCE [LARGE SCALE GENOMIC DNA]</scope>
    <source>
        <strain>CDC 1551 / Oshkosh</strain>
    </source>
</reference>
<accession>P9WMJ8</accession>
<accession>I6QM76</accession>
<accession>O06301</accession>
<accession>P0A5B9</accession>
<accession>P32723</accession>
<dbReference type="EMBL" id="AE000516">
    <property type="protein sequence ID" value="AAK44587.1"/>
    <property type="molecule type" value="Genomic_DNA"/>
</dbReference>
<dbReference type="PIR" id="G70574">
    <property type="entry name" value="G70574"/>
</dbReference>
<dbReference type="RefSeq" id="WP_003401814.1">
    <property type="nucleotide sequence ID" value="NZ_KK341227.1"/>
</dbReference>
<dbReference type="RefSeq" id="WP_010924232.1">
    <property type="nucleotide sequence ID" value="NC_002755.2"/>
</dbReference>
<dbReference type="SMR" id="P9WMJ8"/>
<dbReference type="GeneID" id="45424316"/>
<dbReference type="KEGG" id="mtc:MT0365"/>
<dbReference type="PATRIC" id="fig|83331.31.peg.388"/>
<dbReference type="HOGENOM" id="CLU_005965_2_4_11"/>
<dbReference type="Proteomes" id="UP000001020">
    <property type="component" value="Chromosome"/>
</dbReference>
<dbReference type="GO" id="GO:0005524">
    <property type="term" value="F:ATP binding"/>
    <property type="evidence" value="ECO:0007669"/>
    <property type="project" value="UniProtKB-UniRule"/>
</dbReference>
<dbReference type="GO" id="GO:0140662">
    <property type="term" value="F:ATP-dependent protein folding chaperone"/>
    <property type="evidence" value="ECO:0007669"/>
    <property type="project" value="InterPro"/>
</dbReference>
<dbReference type="GO" id="GO:0051082">
    <property type="term" value="F:unfolded protein binding"/>
    <property type="evidence" value="ECO:0007669"/>
    <property type="project" value="InterPro"/>
</dbReference>
<dbReference type="CDD" id="cd10234">
    <property type="entry name" value="ASKHA_NBD_HSP70_DnaK-like"/>
    <property type="match status" value="1"/>
</dbReference>
<dbReference type="FunFam" id="2.60.34.10:FF:000014">
    <property type="entry name" value="Chaperone protein DnaK HSP70"/>
    <property type="match status" value="1"/>
</dbReference>
<dbReference type="FunFam" id="1.20.1270.10:FF:000001">
    <property type="entry name" value="Molecular chaperone DnaK"/>
    <property type="match status" value="1"/>
</dbReference>
<dbReference type="FunFam" id="3.30.420.40:FF:000071">
    <property type="entry name" value="Molecular chaperone DnaK"/>
    <property type="match status" value="1"/>
</dbReference>
<dbReference type="FunFam" id="3.90.640.10:FF:000003">
    <property type="entry name" value="Molecular chaperone DnaK"/>
    <property type="match status" value="1"/>
</dbReference>
<dbReference type="Gene3D" id="1.20.1270.10">
    <property type="match status" value="1"/>
</dbReference>
<dbReference type="Gene3D" id="3.30.420.40">
    <property type="match status" value="2"/>
</dbReference>
<dbReference type="Gene3D" id="3.90.640.10">
    <property type="entry name" value="Actin, Chain A, domain 4"/>
    <property type="match status" value="1"/>
</dbReference>
<dbReference type="Gene3D" id="2.60.34.10">
    <property type="entry name" value="Substrate Binding Domain Of DNAk, Chain A, domain 1"/>
    <property type="match status" value="1"/>
</dbReference>
<dbReference type="HAMAP" id="MF_00332">
    <property type="entry name" value="DnaK"/>
    <property type="match status" value="1"/>
</dbReference>
<dbReference type="InterPro" id="IPR043129">
    <property type="entry name" value="ATPase_NBD"/>
</dbReference>
<dbReference type="InterPro" id="IPR012725">
    <property type="entry name" value="Chaperone_DnaK"/>
</dbReference>
<dbReference type="InterPro" id="IPR018181">
    <property type="entry name" value="Heat_shock_70_CS"/>
</dbReference>
<dbReference type="InterPro" id="IPR029048">
    <property type="entry name" value="HSP70_C_sf"/>
</dbReference>
<dbReference type="InterPro" id="IPR029047">
    <property type="entry name" value="HSP70_peptide-bd_sf"/>
</dbReference>
<dbReference type="InterPro" id="IPR013126">
    <property type="entry name" value="Hsp_70_fam"/>
</dbReference>
<dbReference type="NCBIfam" id="NF001413">
    <property type="entry name" value="PRK00290.1"/>
    <property type="match status" value="1"/>
</dbReference>
<dbReference type="NCBIfam" id="TIGR02350">
    <property type="entry name" value="prok_dnaK"/>
    <property type="match status" value="1"/>
</dbReference>
<dbReference type="PANTHER" id="PTHR19375">
    <property type="entry name" value="HEAT SHOCK PROTEIN 70KDA"/>
    <property type="match status" value="1"/>
</dbReference>
<dbReference type="Pfam" id="PF00012">
    <property type="entry name" value="HSP70"/>
    <property type="match status" value="1"/>
</dbReference>
<dbReference type="PRINTS" id="PR00301">
    <property type="entry name" value="HEATSHOCK70"/>
</dbReference>
<dbReference type="SUPFAM" id="SSF53067">
    <property type="entry name" value="Actin-like ATPase domain"/>
    <property type="match status" value="2"/>
</dbReference>
<dbReference type="SUPFAM" id="SSF100934">
    <property type="entry name" value="Heat shock protein 70kD (HSP70), C-terminal subdomain"/>
    <property type="match status" value="1"/>
</dbReference>
<dbReference type="SUPFAM" id="SSF100920">
    <property type="entry name" value="Heat shock protein 70kD (HSP70), peptide-binding domain"/>
    <property type="match status" value="1"/>
</dbReference>
<dbReference type="PROSITE" id="PS00297">
    <property type="entry name" value="HSP70_1"/>
    <property type="match status" value="1"/>
</dbReference>
<dbReference type="PROSITE" id="PS00329">
    <property type="entry name" value="HSP70_2"/>
    <property type="match status" value="1"/>
</dbReference>
<dbReference type="PROSITE" id="PS01036">
    <property type="entry name" value="HSP70_3"/>
    <property type="match status" value="1"/>
</dbReference>
<evidence type="ECO:0000250" key="1"/>
<evidence type="ECO:0000256" key="2">
    <source>
        <dbReference type="SAM" id="MobiDB-lite"/>
    </source>
</evidence>
<evidence type="ECO:0000305" key="3"/>
<protein>
    <recommendedName>
        <fullName>Chaperone protein DnaK</fullName>
    </recommendedName>
    <alternativeName>
        <fullName>HSP70</fullName>
    </alternativeName>
    <alternativeName>
        <fullName>Heat shock 70 kDa protein</fullName>
    </alternativeName>
    <alternativeName>
        <fullName>Heat shock protein 70</fullName>
    </alternativeName>
</protein>
<keyword id="KW-0067">ATP-binding</keyword>
<keyword id="KW-0143">Chaperone</keyword>
<keyword id="KW-0547">Nucleotide-binding</keyword>
<keyword id="KW-0597">Phosphoprotein</keyword>
<keyword id="KW-1185">Reference proteome</keyword>
<keyword id="KW-0346">Stress response</keyword>
<name>DNAK_MYCTO</name>
<proteinExistence type="inferred from homology"/>
<sequence>MARAVGIDLGTTNSVVSVLEGGDPVVVANSEGSRTTPSIVAFARNGEVLVGQPAKNQAVTNVDRTVRSVKRHMGSDWSIEIDGKKYTAPEISARILMKLKRDAEAYLGEDITDAVITTPAYFNDAQRQATKDAGQIAGLNVLRIVNEPTAAALAYGLDKGEKEQRILVFDLGGGTFDVSLLEIGEGVVEVRATSGDNHLGGDDWDQRVVDWLVDKFKGTSGIDLTKDKMAMQRLREAAEKAKIELSSSQSTSINLPYITVDADKNPLFLDEQLTRAEFQRITQDLLDRTRKPFQSVIADTGISVSEIDHVVLVGGSTRMPAVTDLVKELTGGKEPNKGVNPDEVVAVGAALQAGVLKGEVKDVLLLDVTPLSLGIETKGGVMTRLIERNTTIPTKRSETFTTADDNQPSVQIQVYQGEREIAAHNKLLGSFELTGIPPAPRGIPQIEVTFDIDANGIVHVTAKDKGTGKENTIRIQEGSGLSKEDIDRMIKDAEAHAEEDRKRREEADVRNQAETLVYQTEKFVKEQREAEGGSKVPEDTLNKVDAAVAEAKAALGGSDISAIKSAMEKLGQESQALGQAIYEAAQAASQATGAAHPGGEPGGAHPGSADDVVDAEVVDDGREAK</sequence>
<feature type="initiator methionine" description="Removed" evidence="1">
    <location>
        <position position="1"/>
    </location>
</feature>
<feature type="chain" id="PRO_0000427291" description="Chaperone protein DnaK">
    <location>
        <begin position="2"/>
        <end position="625"/>
    </location>
</feature>
<feature type="region of interest" description="Disordered" evidence="2">
    <location>
        <begin position="586"/>
        <end position="625"/>
    </location>
</feature>
<feature type="compositionally biased region" description="Low complexity" evidence="2">
    <location>
        <begin position="586"/>
        <end position="598"/>
    </location>
</feature>
<feature type="modified residue" description="Phosphothreonine; by autocatalysis" evidence="1">
    <location>
        <position position="175"/>
    </location>
</feature>
<organism>
    <name type="scientific">Mycobacterium tuberculosis (strain CDC 1551 / Oshkosh)</name>
    <dbReference type="NCBI Taxonomy" id="83331"/>
    <lineage>
        <taxon>Bacteria</taxon>
        <taxon>Bacillati</taxon>
        <taxon>Actinomycetota</taxon>
        <taxon>Actinomycetes</taxon>
        <taxon>Mycobacteriales</taxon>
        <taxon>Mycobacteriaceae</taxon>
        <taxon>Mycobacterium</taxon>
        <taxon>Mycobacterium tuberculosis complex</taxon>
    </lineage>
</organism>
<gene>
    <name type="primary">dnaK</name>
    <name type="ordered locus">MT0365</name>
</gene>